<keyword id="KW-0067">ATP-binding</keyword>
<keyword id="KW-0173">Coenzyme A biosynthesis</keyword>
<keyword id="KW-0963">Cytoplasm</keyword>
<keyword id="KW-0460">Magnesium</keyword>
<keyword id="KW-0547">Nucleotide-binding</keyword>
<keyword id="KW-0548">Nucleotidyltransferase</keyword>
<keyword id="KW-1185">Reference proteome</keyword>
<keyword id="KW-0808">Transferase</keyword>
<name>COAD_CITBB</name>
<proteinExistence type="inferred from homology"/>
<organism>
    <name type="scientific">Citrifermentans bemidjiense (strain ATCC BAA-1014 / DSM 16622 / JCM 12645 / Bem)</name>
    <name type="common">Geobacter bemidjiensis</name>
    <dbReference type="NCBI Taxonomy" id="404380"/>
    <lineage>
        <taxon>Bacteria</taxon>
        <taxon>Pseudomonadati</taxon>
        <taxon>Thermodesulfobacteriota</taxon>
        <taxon>Desulfuromonadia</taxon>
        <taxon>Geobacterales</taxon>
        <taxon>Geobacteraceae</taxon>
        <taxon>Citrifermentans</taxon>
    </lineage>
</organism>
<reference key="1">
    <citation type="submission" date="2008-07" db="EMBL/GenBank/DDBJ databases">
        <title>Complete sequence of Geobacter bemidjiensis BEM.</title>
        <authorList>
            <consortium name="US DOE Joint Genome Institute"/>
            <person name="Lucas S."/>
            <person name="Copeland A."/>
            <person name="Lapidus A."/>
            <person name="Glavina del Rio T."/>
            <person name="Dalin E."/>
            <person name="Tice H."/>
            <person name="Bruce D."/>
            <person name="Goodwin L."/>
            <person name="Pitluck S."/>
            <person name="Kiss H."/>
            <person name="Brettin T."/>
            <person name="Detter J.C."/>
            <person name="Han C."/>
            <person name="Kuske C.R."/>
            <person name="Schmutz J."/>
            <person name="Larimer F."/>
            <person name="Land M."/>
            <person name="Hauser L."/>
            <person name="Kyrpides N."/>
            <person name="Lykidis A."/>
            <person name="Lovley D."/>
            <person name="Richardson P."/>
        </authorList>
    </citation>
    <scope>NUCLEOTIDE SEQUENCE [LARGE SCALE GENOMIC DNA]</scope>
    <source>
        <strain>ATCC BAA-1014 / DSM 16622 / JCM 12645 / Bem</strain>
    </source>
</reference>
<protein>
    <recommendedName>
        <fullName evidence="1">Phosphopantetheine adenylyltransferase</fullName>
        <ecNumber evidence="1">2.7.7.3</ecNumber>
    </recommendedName>
    <alternativeName>
        <fullName evidence="1">Dephospho-CoA pyrophosphorylase</fullName>
    </alternativeName>
    <alternativeName>
        <fullName evidence="1">Pantetheine-phosphate adenylyltransferase</fullName>
        <shortName evidence="1">PPAT</shortName>
    </alternativeName>
</protein>
<dbReference type="EC" id="2.7.7.3" evidence="1"/>
<dbReference type="EMBL" id="CP001124">
    <property type="protein sequence ID" value="ACH38905.1"/>
    <property type="molecule type" value="Genomic_DNA"/>
</dbReference>
<dbReference type="RefSeq" id="WP_012530323.1">
    <property type="nucleotide sequence ID" value="NC_011146.1"/>
</dbReference>
<dbReference type="SMR" id="B5EB44"/>
<dbReference type="STRING" id="404380.Gbem_1891"/>
<dbReference type="KEGG" id="gbm:Gbem_1891"/>
<dbReference type="eggNOG" id="COG0669">
    <property type="taxonomic scope" value="Bacteria"/>
</dbReference>
<dbReference type="HOGENOM" id="CLU_100149_0_1_7"/>
<dbReference type="OrthoDB" id="9806661at2"/>
<dbReference type="UniPathway" id="UPA00241">
    <property type="reaction ID" value="UER00355"/>
</dbReference>
<dbReference type="Proteomes" id="UP000008825">
    <property type="component" value="Chromosome"/>
</dbReference>
<dbReference type="GO" id="GO:0005737">
    <property type="term" value="C:cytoplasm"/>
    <property type="evidence" value="ECO:0007669"/>
    <property type="project" value="UniProtKB-SubCell"/>
</dbReference>
<dbReference type="GO" id="GO:0005524">
    <property type="term" value="F:ATP binding"/>
    <property type="evidence" value="ECO:0007669"/>
    <property type="project" value="UniProtKB-KW"/>
</dbReference>
<dbReference type="GO" id="GO:0004595">
    <property type="term" value="F:pantetheine-phosphate adenylyltransferase activity"/>
    <property type="evidence" value="ECO:0007669"/>
    <property type="project" value="UniProtKB-UniRule"/>
</dbReference>
<dbReference type="GO" id="GO:0015937">
    <property type="term" value="P:coenzyme A biosynthetic process"/>
    <property type="evidence" value="ECO:0007669"/>
    <property type="project" value="UniProtKB-UniRule"/>
</dbReference>
<dbReference type="CDD" id="cd02163">
    <property type="entry name" value="PPAT"/>
    <property type="match status" value="1"/>
</dbReference>
<dbReference type="Gene3D" id="3.40.50.620">
    <property type="entry name" value="HUPs"/>
    <property type="match status" value="1"/>
</dbReference>
<dbReference type="HAMAP" id="MF_00151">
    <property type="entry name" value="PPAT_bact"/>
    <property type="match status" value="1"/>
</dbReference>
<dbReference type="InterPro" id="IPR004821">
    <property type="entry name" value="Cyt_trans-like"/>
</dbReference>
<dbReference type="InterPro" id="IPR001980">
    <property type="entry name" value="PPAT"/>
</dbReference>
<dbReference type="InterPro" id="IPR014729">
    <property type="entry name" value="Rossmann-like_a/b/a_fold"/>
</dbReference>
<dbReference type="NCBIfam" id="TIGR01510">
    <property type="entry name" value="coaD_prev_kdtB"/>
    <property type="match status" value="1"/>
</dbReference>
<dbReference type="NCBIfam" id="TIGR00125">
    <property type="entry name" value="cyt_tran_rel"/>
    <property type="match status" value="1"/>
</dbReference>
<dbReference type="PANTHER" id="PTHR21342">
    <property type="entry name" value="PHOSPHOPANTETHEINE ADENYLYLTRANSFERASE"/>
    <property type="match status" value="1"/>
</dbReference>
<dbReference type="PANTHER" id="PTHR21342:SF1">
    <property type="entry name" value="PHOSPHOPANTETHEINE ADENYLYLTRANSFERASE"/>
    <property type="match status" value="1"/>
</dbReference>
<dbReference type="Pfam" id="PF01467">
    <property type="entry name" value="CTP_transf_like"/>
    <property type="match status" value="1"/>
</dbReference>
<dbReference type="PRINTS" id="PR01020">
    <property type="entry name" value="LPSBIOSNTHSS"/>
</dbReference>
<dbReference type="SUPFAM" id="SSF52374">
    <property type="entry name" value="Nucleotidylyl transferase"/>
    <property type="match status" value="1"/>
</dbReference>
<sequence length="161" mass="18040">MPLKLAVYPGSFDPVTYGHLDIIDRGLKIFDGVIVAVARNSEKNALFTVQERIELLTEILKDRPEARVETFDGLLVDYVRRVGASVVIRGLRAVSDFEFEFQLAQMNRNITRDVETLFMMTSVPYSYLSSSIVKEVSCLNGPVDKLVPPLVKSALDAKFRG</sequence>
<evidence type="ECO:0000255" key="1">
    <source>
        <dbReference type="HAMAP-Rule" id="MF_00151"/>
    </source>
</evidence>
<accession>B5EB44</accession>
<feature type="chain" id="PRO_1000096797" description="Phosphopantetheine adenylyltransferase">
    <location>
        <begin position="1"/>
        <end position="161"/>
    </location>
</feature>
<feature type="binding site" evidence="1">
    <location>
        <begin position="11"/>
        <end position="12"/>
    </location>
    <ligand>
        <name>ATP</name>
        <dbReference type="ChEBI" id="CHEBI:30616"/>
    </ligand>
</feature>
<feature type="binding site" evidence="1">
    <location>
        <position position="11"/>
    </location>
    <ligand>
        <name>substrate</name>
    </ligand>
</feature>
<feature type="binding site" evidence="1">
    <location>
        <position position="19"/>
    </location>
    <ligand>
        <name>ATP</name>
        <dbReference type="ChEBI" id="CHEBI:30616"/>
    </ligand>
</feature>
<feature type="binding site" evidence="1">
    <location>
        <position position="43"/>
    </location>
    <ligand>
        <name>substrate</name>
    </ligand>
</feature>
<feature type="binding site" evidence="1">
    <location>
        <position position="75"/>
    </location>
    <ligand>
        <name>substrate</name>
    </ligand>
</feature>
<feature type="binding site" evidence="1">
    <location>
        <position position="89"/>
    </location>
    <ligand>
        <name>substrate</name>
    </ligand>
</feature>
<feature type="binding site" evidence="1">
    <location>
        <begin position="90"/>
        <end position="92"/>
    </location>
    <ligand>
        <name>ATP</name>
        <dbReference type="ChEBI" id="CHEBI:30616"/>
    </ligand>
</feature>
<feature type="binding site" evidence="1">
    <location>
        <position position="100"/>
    </location>
    <ligand>
        <name>ATP</name>
        <dbReference type="ChEBI" id="CHEBI:30616"/>
    </ligand>
</feature>
<feature type="binding site" evidence="1">
    <location>
        <begin position="125"/>
        <end position="131"/>
    </location>
    <ligand>
        <name>ATP</name>
        <dbReference type="ChEBI" id="CHEBI:30616"/>
    </ligand>
</feature>
<feature type="site" description="Transition state stabilizer" evidence="1">
    <location>
        <position position="19"/>
    </location>
</feature>
<gene>
    <name evidence="1" type="primary">coaD</name>
    <name type="ordered locus">Gbem_1891</name>
</gene>
<comment type="function">
    <text evidence="1">Reversibly transfers an adenylyl group from ATP to 4'-phosphopantetheine, yielding dephospho-CoA (dPCoA) and pyrophosphate.</text>
</comment>
<comment type="catalytic activity">
    <reaction evidence="1">
        <text>(R)-4'-phosphopantetheine + ATP + H(+) = 3'-dephospho-CoA + diphosphate</text>
        <dbReference type="Rhea" id="RHEA:19801"/>
        <dbReference type="ChEBI" id="CHEBI:15378"/>
        <dbReference type="ChEBI" id="CHEBI:30616"/>
        <dbReference type="ChEBI" id="CHEBI:33019"/>
        <dbReference type="ChEBI" id="CHEBI:57328"/>
        <dbReference type="ChEBI" id="CHEBI:61723"/>
        <dbReference type="EC" id="2.7.7.3"/>
    </reaction>
</comment>
<comment type="cofactor">
    <cofactor evidence="1">
        <name>Mg(2+)</name>
        <dbReference type="ChEBI" id="CHEBI:18420"/>
    </cofactor>
</comment>
<comment type="pathway">
    <text evidence="1">Cofactor biosynthesis; coenzyme A biosynthesis; CoA from (R)-pantothenate: step 4/5.</text>
</comment>
<comment type="subunit">
    <text evidence="1">Homohexamer.</text>
</comment>
<comment type="subcellular location">
    <subcellularLocation>
        <location evidence="1">Cytoplasm</location>
    </subcellularLocation>
</comment>
<comment type="similarity">
    <text evidence="1">Belongs to the bacterial CoaD family.</text>
</comment>